<accession>Q14C86</accession>
<accession>A8MYK3</accession>
<accession>B0QZ62</accession>
<accession>B0QZ63</accession>
<accession>B0QZ64</accession>
<accession>Q14C76</accession>
<accession>Q2Q1W1</accession>
<accession>Q8ND92</accession>
<accession>Q8WU86</accession>
<accession>Q96CZ4</accession>
<accession>Q9NXQ1</accession>
<accession>Q9P207</accession>
<accession>Q9Y4N0</accession>
<dbReference type="EMBL" id="DQ233254">
    <property type="protein sequence ID" value="ABB71126.1"/>
    <property type="molecule type" value="mRNA"/>
</dbReference>
<dbReference type="EMBL" id="AB040954">
    <property type="protein sequence ID" value="BAA96045.3"/>
    <property type="status" value="ALT_INIT"/>
    <property type="molecule type" value="mRNA"/>
</dbReference>
<dbReference type="EMBL" id="AL354710">
    <property type="status" value="NOT_ANNOTATED_CDS"/>
    <property type="molecule type" value="Genomic_DNA"/>
</dbReference>
<dbReference type="EMBL" id="AL627223">
    <property type="status" value="NOT_ANNOTATED_CDS"/>
    <property type="molecule type" value="Genomic_DNA"/>
</dbReference>
<dbReference type="EMBL" id="CH471090">
    <property type="protein sequence ID" value="EAW87622.1"/>
    <property type="molecule type" value="Genomic_DNA"/>
</dbReference>
<dbReference type="EMBL" id="CH471090">
    <property type="protein sequence ID" value="EAW87623.1"/>
    <property type="molecule type" value="Genomic_DNA"/>
</dbReference>
<dbReference type="EMBL" id="BC013635">
    <property type="protein sequence ID" value="AAH13635.1"/>
    <property type="molecule type" value="mRNA"/>
</dbReference>
<dbReference type="EMBL" id="BC021119">
    <property type="protein sequence ID" value="AAH21119.1"/>
    <property type="status" value="ALT_SEQ"/>
    <property type="molecule type" value="mRNA"/>
</dbReference>
<dbReference type="EMBL" id="BC114937">
    <property type="protein sequence ID" value="AAI14938.1"/>
    <property type="molecule type" value="mRNA"/>
</dbReference>
<dbReference type="EMBL" id="BC114962">
    <property type="protein sequence ID" value="AAI14963.1"/>
    <property type="molecule type" value="mRNA"/>
</dbReference>
<dbReference type="EMBL" id="AK000126">
    <property type="protein sequence ID" value="BAA90959.1"/>
    <property type="status" value="ALT_SEQ"/>
    <property type="molecule type" value="mRNA"/>
</dbReference>
<dbReference type="EMBL" id="AL080196">
    <property type="protein sequence ID" value="CAB45770.1"/>
    <property type="molecule type" value="mRNA"/>
</dbReference>
<dbReference type="EMBL" id="AL834325">
    <property type="protein sequence ID" value="CAD38993.1"/>
    <property type="molecule type" value="mRNA"/>
</dbReference>
<dbReference type="CCDS" id="CCDS35138.1">
    <molecule id="Q14C86-6"/>
</dbReference>
<dbReference type="CCDS" id="CCDS65130.1">
    <molecule id="Q14C86-4"/>
</dbReference>
<dbReference type="CCDS" id="CCDS65131.1">
    <molecule id="Q14C86-2"/>
</dbReference>
<dbReference type="CCDS" id="CCDS65132.1">
    <molecule id="Q14C86-1"/>
</dbReference>
<dbReference type="CCDS" id="CCDS83414.1">
    <molecule id="Q14C86-3"/>
</dbReference>
<dbReference type="PIR" id="T12506">
    <property type="entry name" value="T12506"/>
</dbReference>
<dbReference type="RefSeq" id="NP_001269608.1">
    <molecule id="Q14C86-1"/>
    <property type="nucleotide sequence ID" value="NM_001282679.2"/>
</dbReference>
<dbReference type="RefSeq" id="NP_001269609.1">
    <molecule id="Q14C86-2"/>
    <property type="nucleotide sequence ID" value="NM_001282680.3"/>
</dbReference>
<dbReference type="RefSeq" id="NP_001269610.1">
    <molecule id="Q14C86-4"/>
    <property type="nucleotide sequence ID" value="NM_001282681.3"/>
</dbReference>
<dbReference type="RefSeq" id="NP_001317707.1">
    <molecule id="Q14C86-3"/>
    <property type="nucleotide sequence ID" value="NM_001330778.3"/>
</dbReference>
<dbReference type="RefSeq" id="NP_001341223.1">
    <molecule id="Q14C86-2"/>
    <property type="nucleotide sequence ID" value="NM_001354294.2"/>
</dbReference>
<dbReference type="RefSeq" id="NP_001341224.1">
    <molecule id="Q14C86-2"/>
    <property type="nucleotide sequence ID" value="NM_001354295.2"/>
</dbReference>
<dbReference type="RefSeq" id="NP_001341225.1">
    <molecule id="Q14C86-2"/>
    <property type="nucleotide sequence ID" value="NM_001354296.2"/>
</dbReference>
<dbReference type="RefSeq" id="NP_001341226.1">
    <molecule id="Q14C86-4"/>
    <property type="nucleotide sequence ID" value="NM_001354297.2"/>
</dbReference>
<dbReference type="RefSeq" id="NP_001341228.1">
    <molecule id="Q14C86-2"/>
    <property type="nucleotide sequence ID" value="NM_001354299.2"/>
</dbReference>
<dbReference type="RefSeq" id="NP_001341229.1">
    <molecule id="Q14C86-4"/>
    <property type="nucleotide sequence ID" value="NM_001354300.2"/>
</dbReference>
<dbReference type="RefSeq" id="NP_001341230.1">
    <molecule id="Q14C86-2"/>
    <property type="nucleotide sequence ID" value="NM_001354301.2"/>
</dbReference>
<dbReference type="RefSeq" id="NP_056450.2">
    <molecule id="Q14C86-6"/>
    <property type="nucleotide sequence ID" value="NM_015635.3"/>
</dbReference>
<dbReference type="RefSeq" id="XP_005251958.1">
    <property type="nucleotide sequence ID" value="XM_005251901.3"/>
</dbReference>
<dbReference type="RefSeq" id="XP_005251961.1">
    <molecule id="Q14C86-3"/>
    <property type="nucleotide sequence ID" value="XM_005251904.4"/>
</dbReference>
<dbReference type="RefSeq" id="XP_006717107.1">
    <property type="nucleotide sequence ID" value="XM_006717044.3"/>
</dbReference>
<dbReference type="RefSeq" id="XP_011516801.1">
    <molecule id="Q14C86-6"/>
    <property type="nucleotide sequence ID" value="XM_011518499.3"/>
</dbReference>
<dbReference type="RefSeq" id="XP_011516802.1">
    <molecule id="Q14C86-6"/>
    <property type="nucleotide sequence ID" value="XM_011518500.3"/>
</dbReference>
<dbReference type="RefSeq" id="XP_011516804.1">
    <property type="nucleotide sequence ID" value="XM_011518502.2"/>
</dbReference>
<dbReference type="RefSeq" id="XP_016870089.1">
    <property type="nucleotide sequence ID" value="XM_017014600.1"/>
</dbReference>
<dbReference type="RefSeq" id="XP_016870090.1">
    <property type="nucleotide sequence ID" value="XM_017014601.1"/>
</dbReference>
<dbReference type="RefSeq" id="XP_016870091.1">
    <property type="nucleotide sequence ID" value="XM_017014602.1"/>
</dbReference>
<dbReference type="RefSeq" id="XP_016870092.1">
    <property type="nucleotide sequence ID" value="XM_017014603.1"/>
</dbReference>
<dbReference type="RefSeq" id="XP_016870093.1">
    <property type="nucleotide sequence ID" value="XM_017014604.1"/>
</dbReference>
<dbReference type="RefSeq" id="XP_016870095.1">
    <molecule id="Q14C86-4"/>
    <property type="nucleotide sequence ID" value="XM_017014606.2"/>
</dbReference>
<dbReference type="RefSeq" id="XP_016870096.1">
    <property type="nucleotide sequence ID" value="XM_017014607.1"/>
</dbReference>
<dbReference type="RefSeq" id="XP_016870097.1">
    <property type="nucleotide sequence ID" value="XM_017014608.1"/>
</dbReference>
<dbReference type="RefSeq" id="XP_016870098.1">
    <molecule id="Q14C86-3"/>
    <property type="nucleotide sequence ID" value="XM_017014609.2"/>
</dbReference>
<dbReference type="RefSeq" id="XP_047279133.1">
    <molecule id="Q14C86-6"/>
    <property type="nucleotide sequence ID" value="XM_047423177.1"/>
</dbReference>
<dbReference type="RefSeq" id="XP_047279134.1">
    <molecule id="Q14C86-6"/>
    <property type="nucleotide sequence ID" value="XM_047423178.1"/>
</dbReference>
<dbReference type="RefSeq" id="XP_047279135.1">
    <molecule id="Q14C86-6"/>
    <property type="nucleotide sequence ID" value="XM_047423179.1"/>
</dbReference>
<dbReference type="RefSeq" id="XP_047279136.1">
    <molecule id="Q14C86-6"/>
    <property type="nucleotide sequence ID" value="XM_047423180.1"/>
</dbReference>
<dbReference type="RefSeq" id="XP_047279137.1">
    <molecule id="Q14C86-6"/>
    <property type="nucleotide sequence ID" value="XM_047423181.1"/>
</dbReference>
<dbReference type="RefSeq" id="XP_047279138.1">
    <molecule id="Q14C86-6"/>
    <property type="nucleotide sequence ID" value="XM_047423182.1"/>
</dbReference>
<dbReference type="RefSeq" id="XP_047279139.1">
    <molecule id="Q14C86-6"/>
    <property type="nucleotide sequence ID" value="XM_047423183.1"/>
</dbReference>
<dbReference type="RefSeq" id="XP_047279145.1">
    <molecule id="Q14C86-2"/>
    <property type="nucleotide sequence ID" value="XM_047423189.1"/>
</dbReference>
<dbReference type="RefSeq" id="XP_047279146.1">
    <molecule id="Q14C86-2"/>
    <property type="nucleotide sequence ID" value="XM_047423190.1"/>
</dbReference>
<dbReference type="RefSeq" id="XP_047279147.1">
    <molecule id="Q14C86-2"/>
    <property type="nucleotide sequence ID" value="XM_047423191.1"/>
</dbReference>
<dbReference type="RefSeq" id="XP_047279149.1">
    <molecule id="Q14C86-2"/>
    <property type="nucleotide sequence ID" value="XM_047423193.1"/>
</dbReference>
<dbReference type="RefSeq" id="XP_047279150.1">
    <molecule id="Q14C86-4"/>
    <property type="nucleotide sequence ID" value="XM_047423194.1"/>
</dbReference>
<dbReference type="RefSeq" id="XP_047279151.1">
    <molecule id="Q14C86-4"/>
    <property type="nucleotide sequence ID" value="XM_047423195.1"/>
</dbReference>
<dbReference type="RefSeq" id="XP_047279152.1">
    <molecule id="Q14C86-4"/>
    <property type="nucleotide sequence ID" value="XM_047423196.1"/>
</dbReference>
<dbReference type="RefSeq" id="XP_047279153.1">
    <molecule id="Q14C86-4"/>
    <property type="nucleotide sequence ID" value="XM_047423197.1"/>
</dbReference>
<dbReference type="RefSeq" id="XP_047279156.1">
    <molecule id="Q14C86-4"/>
    <property type="nucleotide sequence ID" value="XM_047423200.1"/>
</dbReference>
<dbReference type="RefSeq" id="XP_047279157.1">
    <molecule id="Q14C86-3"/>
    <property type="nucleotide sequence ID" value="XM_047423201.1"/>
</dbReference>
<dbReference type="RefSeq" id="XP_047279158.1">
    <molecule id="Q14C86-3"/>
    <property type="nucleotide sequence ID" value="XM_047423202.1"/>
</dbReference>
<dbReference type="RefSeq" id="XP_047279159.1">
    <molecule id="Q14C86-3"/>
    <property type="nucleotide sequence ID" value="XM_047423203.1"/>
</dbReference>
<dbReference type="RefSeq" id="XP_047279160.1">
    <molecule id="Q14C86-3"/>
    <property type="nucleotide sequence ID" value="XM_047423204.1"/>
</dbReference>
<dbReference type="RefSeq" id="XP_047279161.1">
    <molecule id="Q14C86-3"/>
    <property type="nucleotide sequence ID" value="XM_047423205.1"/>
</dbReference>
<dbReference type="RefSeq" id="XP_054218634.1">
    <molecule id="Q14C86-6"/>
    <property type="nucleotide sequence ID" value="XM_054362659.1"/>
</dbReference>
<dbReference type="RefSeq" id="XP_054218635.1">
    <molecule id="Q14C86-6"/>
    <property type="nucleotide sequence ID" value="XM_054362660.1"/>
</dbReference>
<dbReference type="RefSeq" id="XP_054218636.1">
    <molecule id="Q14C86-6"/>
    <property type="nucleotide sequence ID" value="XM_054362661.1"/>
</dbReference>
<dbReference type="RefSeq" id="XP_054218637.1">
    <molecule id="Q14C86-6"/>
    <property type="nucleotide sequence ID" value="XM_054362662.1"/>
</dbReference>
<dbReference type="RefSeq" id="XP_054218638.1">
    <molecule id="Q14C86-6"/>
    <property type="nucleotide sequence ID" value="XM_054362663.1"/>
</dbReference>
<dbReference type="RefSeq" id="XP_054218639.1">
    <molecule id="Q14C86-6"/>
    <property type="nucleotide sequence ID" value="XM_054362664.1"/>
</dbReference>
<dbReference type="RefSeq" id="XP_054218640.1">
    <molecule id="Q14C86-6"/>
    <property type="nucleotide sequence ID" value="XM_054362665.1"/>
</dbReference>
<dbReference type="RefSeq" id="XP_054218641.1">
    <molecule id="Q14C86-6"/>
    <property type="nucleotide sequence ID" value="XM_054362666.1"/>
</dbReference>
<dbReference type="RefSeq" id="XP_054218642.1">
    <molecule id="Q14C86-6"/>
    <property type="nucleotide sequence ID" value="XM_054362667.1"/>
</dbReference>
<dbReference type="RefSeq" id="XP_054218648.1">
    <molecule id="Q14C86-2"/>
    <property type="nucleotide sequence ID" value="XM_054362673.1"/>
</dbReference>
<dbReference type="RefSeq" id="XP_054218649.1">
    <molecule id="Q14C86-2"/>
    <property type="nucleotide sequence ID" value="XM_054362674.1"/>
</dbReference>
<dbReference type="RefSeq" id="XP_054218650.1">
    <molecule id="Q14C86-2"/>
    <property type="nucleotide sequence ID" value="XM_054362675.1"/>
</dbReference>
<dbReference type="RefSeq" id="XP_054218653.1">
    <molecule id="Q14C86-2"/>
    <property type="nucleotide sequence ID" value="XM_054362678.1"/>
</dbReference>
<dbReference type="RefSeq" id="XP_054218654.1">
    <molecule id="Q14C86-4"/>
    <property type="nucleotide sequence ID" value="XM_054362679.1"/>
</dbReference>
<dbReference type="RefSeq" id="XP_054218655.1">
    <molecule id="Q14C86-4"/>
    <property type="nucleotide sequence ID" value="XM_054362680.1"/>
</dbReference>
<dbReference type="RefSeq" id="XP_054218656.1">
    <molecule id="Q14C86-4"/>
    <property type="nucleotide sequence ID" value="XM_054362681.1"/>
</dbReference>
<dbReference type="RefSeq" id="XP_054218657.1">
    <molecule id="Q14C86-4"/>
    <property type="nucleotide sequence ID" value="XM_054362682.1"/>
</dbReference>
<dbReference type="RefSeq" id="XP_054218658.1">
    <molecule id="Q14C86-4"/>
    <property type="nucleotide sequence ID" value="XM_054362683.1"/>
</dbReference>
<dbReference type="RefSeq" id="XP_054218661.1">
    <molecule id="Q14C86-4"/>
    <property type="nucleotide sequence ID" value="XM_054362686.1"/>
</dbReference>
<dbReference type="RefSeq" id="XP_054218662.1">
    <molecule id="Q14C86-4"/>
    <property type="nucleotide sequence ID" value="XM_054362687.1"/>
</dbReference>
<dbReference type="RefSeq" id="XP_054218663.1">
    <molecule id="Q14C86-3"/>
    <property type="nucleotide sequence ID" value="XM_054362688.1"/>
</dbReference>
<dbReference type="RefSeq" id="XP_054218664.1">
    <molecule id="Q14C86-3"/>
    <property type="nucleotide sequence ID" value="XM_054362689.1"/>
</dbReference>
<dbReference type="RefSeq" id="XP_054218665.1">
    <molecule id="Q14C86-3"/>
    <property type="nucleotide sequence ID" value="XM_054362690.1"/>
</dbReference>
<dbReference type="RefSeq" id="XP_054218666.1">
    <molecule id="Q14C86-3"/>
    <property type="nucleotide sequence ID" value="XM_054362691.1"/>
</dbReference>
<dbReference type="RefSeq" id="XP_054218667.1">
    <molecule id="Q14C86-3"/>
    <property type="nucleotide sequence ID" value="XM_054362692.1"/>
</dbReference>
<dbReference type="RefSeq" id="XP_054218668.1">
    <molecule id="Q14C86-3"/>
    <property type="nucleotide sequence ID" value="XM_054362693.1"/>
</dbReference>
<dbReference type="SMR" id="Q14C86"/>
<dbReference type="BioGRID" id="117568">
    <property type="interactions" value="197"/>
</dbReference>
<dbReference type="FunCoup" id="Q14C86">
    <property type="interactions" value="4895"/>
</dbReference>
<dbReference type="IntAct" id="Q14C86">
    <property type="interactions" value="59"/>
</dbReference>
<dbReference type="MINT" id="Q14C86"/>
<dbReference type="STRING" id="9606.ENSP00000377665"/>
<dbReference type="GlyCosmos" id="Q14C86">
    <property type="glycosylation" value="1 site, 1 glycan"/>
</dbReference>
<dbReference type="GlyGen" id="Q14C86">
    <property type="glycosylation" value="2 sites, 1 O-linked glycan (1 site)"/>
</dbReference>
<dbReference type="iPTMnet" id="Q14C86"/>
<dbReference type="MetOSite" id="Q14C86"/>
<dbReference type="PhosphoSitePlus" id="Q14C86"/>
<dbReference type="BioMuta" id="GAPVD1"/>
<dbReference type="DMDM" id="172046859"/>
<dbReference type="jPOST" id="Q14C86"/>
<dbReference type="MassIVE" id="Q14C86"/>
<dbReference type="PaxDb" id="9606-ENSP00000377664"/>
<dbReference type="PeptideAtlas" id="Q14C86"/>
<dbReference type="ProteomicsDB" id="60308">
    <molecule id="Q14C86-1"/>
</dbReference>
<dbReference type="ProteomicsDB" id="60309">
    <molecule id="Q14C86-2"/>
</dbReference>
<dbReference type="ProteomicsDB" id="60310">
    <molecule id="Q14C86-3"/>
</dbReference>
<dbReference type="ProteomicsDB" id="60311">
    <molecule id="Q14C86-4"/>
</dbReference>
<dbReference type="ProteomicsDB" id="60312">
    <molecule id="Q14C86-5"/>
</dbReference>
<dbReference type="ProteomicsDB" id="60313">
    <molecule id="Q14C86-6"/>
</dbReference>
<dbReference type="Pumba" id="Q14C86"/>
<dbReference type="Antibodypedia" id="30544">
    <property type="antibodies" value="98 antibodies from 19 providers"/>
</dbReference>
<dbReference type="DNASU" id="26130"/>
<dbReference type="Ensembl" id="ENST00000297933.11">
    <molecule id="Q14C86-2"/>
    <property type="protein sequence ID" value="ENSP00000297933.6"/>
    <property type="gene ID" value="ENSG00000165219.23"/>
</dbReference>
<dbReference type="Ensembl" id="ENST00000312123.13">
    <molecule id="Q14C86-4"/>
    <property type="protein sequence ID" value="ENSP00000309582.9"/>
    <property type="gene ID" value="ENSG00000165219.23"/>
</dbReference>
<dbReference type="Ensembl" id="ENST00000394104.6">
    <molecule id="Q14C86-1"/>
    <property type="protein sequence ID" value="ENSP00000377664.2"/>
    <property type="gene ID" value="ENSG00000165219.23"/>
</dbReference>
<dbReference type="Ensembl" id="ENST00000394105.6">
    <molecule id="Q14C86-6"/>
    <property type="protein sequence ID" value="ENSP00000377665.2"/>
    <property type="gene ID" value="ENSG00000165219.23"/>
</dbReference>
<dbReference type="Ensembl" id="ENST00000470056.5">
    <molecule id="Q14C86-3"/>
    <property type="protein sequence ID" value="ENSP00000419767.1"/>
    <property type="gene ID" value="ENSG00000165219.23"/>
</dbReference>
<dbReference type="Ensembl" id="ENST00000495955.5">
    <molecule id="Q14C86-1"/>
    <property type="protein sequence ID" value="ENSP00000419063.1"/>
    <property type="gene ID" value="ENSG00000165219.23"/>
</dbReference>
<dbReference type="GeneID" id="26130"/>
<dbReference type="KEGG" id="hsa:26130"/>
<dbReference type="MANE-Select" id="ENST00000297933.11">
    <molecule id="Q14C86-2"/>
    <property type="protein sequence ID" value="ENSP00000297933.6"/>
    <property type="RefSeq nucleotide sequence ID" value="NM_001282680.3"/>
    <property type="RefSeq protein sequence ID" value="NP_001269609.1"/>
</dbReference>
<dbReference type="UCSC" id="uc004bpq.5">
    <molecule id="Q14C86-1"/>
    <property type="organism name" value="human"/>
</dbReference>
<dbReference type="AGR" id="HGNC:23375"/>
<dbReference type="CTD" id="26130"/>
<dbReference type="DisGeNET" id="26130"/>
<dbReference type="GeneCards" id="GAPVD1"/>
<dbReference type="HGNC" id="HGNC:23375">
    <property type="gene designation" value="GAPVD1"/>
</dbReference>
<dbReference type="HPA" id="ENSG00000165219">
    <property type="expression patterns" value="Low tissue specificity"/>
</dbReference>
<dbReference type="MalaCards" id="GAPVD1"/>
<dbReference type="MIM" id="611714">
    <property type="type" value="gene"/>
</dbReference>
<dbReference type="neXtProt" id="NX_Q14C86"/>
<dbReference type="OpenTargets" id="ENSG00000165219"/>
<dbReference type="Orphanet" id="656">
    <property type="disease" value="Hereditary steroid-resistant nephrotic syndrome"/>
</dbReference>
<dbReference type="PharmGKB" id="PA142671748"/>
<dbReference type="VEuPathDB" id="HostDB:ENSG00000165219"/>
<dbReference type="eggNOG" id="KOG2319">
    <property type="taxonomic scope" value="Eukaryota"/>
</dbReference>
<dbReference type="GeneTree" id="ENSGT00940000156611"/>
<dbReference type="HOGENOM" id="CLU_002165_1_0_1"/>
<dbReference type="InParanoid" id="Q14C86"/>
<dbReference type="OMA" id="ENHEIML"/>
<dbReference type="OrthoDB" id="10264848at2759"/>
<dbReference type="PAN-GO" id="Q14C86">
    <property type="GO annotations" value="4 GO annotations based on evolutionary models"/>
</dbReference>
<dbReference type="PhylomeDB" id="Q14C86"/>
<dbReference type="TreeFam" id="TF105908"/>
<dbReference type="PathwayCommons" id="Q14C86"/>
<dbReference type="Reactome" id="R-HSA-8856828">
    <property type="pathway name" value="Clathrin-mediated endocytosis"/>
</dbReference>
<dbReference type="Reactome" id="R-HSA-8876198">
    <property type="pathway name" value="RAB GEFs exchange GTP for GDP on RABs"/>
</dbReference>
<dbReference type="SignaLink" id="Q14C86"/>
<dbReference type="BioGRID-ORCS" id="26130">
    <property type="hits" value="10 hits in 1054 CRISPR screens"/>
</dbReference>
<dbReference type="CD-CODE" id="FB4E32DD">
    <property type="entry name" value="Presynaptic clusters and postsynaptic densities"/>
</dbReference>
<dbReference type="ChiTaRS" id="GAPVD1">
    <property type="organism name" value="human"/>
</dbReference>
<dbReference type="GeneWiki" id="GAPVD1"/>
<dbReference type="GenomeRNAi" id="26130"/>
<dbReference type="Pharos" id="Q14C86">
    <property type="development level" value="Tbio"/>
</dbReference>
<dbReference type="PRO" id="PR:Q14C86"/>
<dbReference type="Proteomes" id="UP000005640">
    <property type="component" value="Chromosome 9"/>
</dbReference>
<dbReference type="RNAct" id="Q14C86">
    <property type="molecule type" value="protein"/>
</dbReference>
<dbReference type="Bgee" id="ENSG00000165219">
    <property type="expression patterns" value="Expressed in bronchial epithelial cell and 213 other cell types or tissues"/>
</dbReference>
<dbReference type="ExpressionAtlas" id="Q14C86">
    <property type="expression patterns" value="baseline and differential"/>
</dbReference>
<dbReference type="GO" id="GO:0005829">
    <property type="term" value="C:cytosol"/>
    <property type="evidence" value="ECO:0000314"/>
    <property type="project" value="HPA"/>
</dbReference>
<dbReference type="GO" id="GO:0030139">
    <property type="term" value="C:endocytic vesicle"/>
    <property type="evidence" value="ECO:0000318"/>
    <property type="project" value="GO_Central"/>
</dbReference>
<dbReference type="GO" id="GO:0005768">
    <property type="term" value="C:endosome"/>
    <property type="evidence" value="ECO:0007669"/>
    <property type="project" value="UniProtKB-SubCell"/>
</dbReference>
<dbReference type="GO" id="GO:0005886">
    <property type="term" value="C:plasma membrane"/>
    <property type="evidence" value="ECO:0000314"/>
    <property type="project" value="HPA"/>
</dbReference>
<dbReference type="GO" id="GO:0045296">
    <property type="term" value="F:cadherin binding"/>
    <property type="evidence" value="ECO:0007005"/>
    <property type="project" value="BHF-UCL"/>
</dbReference>
<dbReference type="GO" id="GO:0032794">
    <property type="term" value="F:GTPase activating protein binding"/>
    <property type="evidence" value="ECO:0000315"/>
    <property type="project" value="UniProtKB"/>
</dbReference>
<dbReference type="GO" id="GO:0005096">
    <property type="term" value="F:GTPase activator activity"/>
    <property type="evidence" value="ECO:0007669"/>
    <property type="project" value="UniProtKB-KW"/>
</dbReference>
<dbReference type="GO" id="GO:0005085">
    <property type="term" value="F:guanyl-nucleotide exchange factor activity"/>
    <property type="evidence" value="ECO:0000315"/>
    <property type="project" value="UniProtKB"/>
</dbReference>
<dbReference type="GO" id="GO:0031267">
    <property type="term" value="F:small GTPase binding"/>
    <property type="evidence" value="ECO:0000318"/>
    <property type="project" value="GO_Central"/>
</dbReference>
<dbReference type="GO" id="GO:0006897">
    <property type="term" value="P:endocytosis"/>
    <property type="evidence" value="ECO:0007669"/>
    <property type="project" value="UniProtKB-KW"/>
</dbReference>
<dbReference type="GO" id="GO:0051223">
    <property type="term" value="P:regulation of protein transport"/>
    <property type="evidence" value="ECO:0000315"/>
    <property type="project" value="UniProtKB"/>
</dbReference>
<dbReference type="CDD" id="cd05129">
    <property type="entry name" value="RasGAP_RAP6"/>
    <property type="match status" value="1"/>
</dbReference>
<dbReference type="FunFam" id="1.10.246.120:FF:000001">
    <property type="entry name" value="GTPase-activating protein and VPS9 domain-containing protein 1 isoform X1"/>
    <property type="match status" value="1"/>
</dbReference>
<dbReference type="FunFam" id="1.10.506.10:FF:000009">
    <property type="entry name" value="GTPase-activating protein and VPS9 domain-containing protein 1 isoform X1"/>
    <property type="match status" value="1"/>
</dbReference>
<dbReference type="FunFam" id="1.20.1050.80:FF:000001">
    <property type="entry name" value="GTPase-activating protein and VPS9 domain-containing protein 1 isoform X1"/>
    <property type="match status" value="1"/>
</dbReference>
<dbReference type="Gene3D" id="1.10.246.120">
    <property type="match status" value="1"/>
</dbReference>
<dbReference type="Gene3D" id="1.10.506.10">
    <property type="entry name" value="GTPase Activation - p120gap, domain 1"/>
    <property type="match status" value="1"/>
</dbReference>
<dbReference type="Gene3D" id="1.20.1050.80">
    <property type="entry name" value="VPS9 domain"/>
    <property type="match status" value="1"/>
</dbReference>
<dbReference type="InterPro" id="IPR041545">
    <property type="entry name" value="DUF5601"/>
</dbReference>
<dbReference type="InterPro" id="IPR001936">
    <property type="entry name" value="RasGAP_dom"/>
</dbReference>
<dbReference type="InterPro" id="IPR008936">
    <property type="entry name" value="Rho_GTPase_activation_prot"/>
</dbReference>
<dbReference type="InterPro" id="IPR003123">
    <property type="entry name" value="VPS9"/>
</dbReference>
<dbReference type="InterPro" id="IPR045046">
    <property type="entry name" value="Vps9-like"/>
</dbReference>
<dbReference type="InterPro" id="IPR037191">
    <property type="entry name" value="VPS9_dom_sf"/>
</dbReference>
<dbReference type="PANTHER" id="PTHR23101:SF25">
    <property type="entry name" value="GTPASE-ACTIVATING PROTEIN AND VPS9 DOMAIN-CONTAINING PROTEIN 1"/>
    <property type="match status" value="1"/>
</dbReference>
<dbReference type="PANTHER" id="PTHR23101">
    <property type="entry name" value="RAB GDP/GTP EXCHANGE FACTOR"/>
    <property type="match status" value="1"/>
</dbReference>
<dbReference type="Pfam" id="PF18151">
    <property type="entry name" value="DUF5601"/>
    <property type="match status" value="1"/>
</dbReference>
<dbReference type="Pfam" id="PF00616">
    <property type="entry name" value="RasGAP"/>
    <property type="match status" value="1"/>
</dbReference>
<dbReference type="Pfam" id="PF02204">
    <property type="entry name" value="VPS9"/>
    <property type="match status" value="1"/>
</dbReference>
<dbReference type="SMART" id="SM00167">
    <property type="entry name" value="VPS9"/>
    <property type="match status" value="1"/>
</dbReference>
<dbReference type="SUPFAM" id="SSF48350">
    <property type="entry name" value="GTPase activation domain, GAP"/>
    <property type="match status" value="1"/>
</dbReference>
<dbReference type="SUPFAM" id="SSF109993">
    <property type="entry name" value="VPS9 domain"/>
    <property type="match status" value="1"/>
</dbReference>
<dbReference type="PROSITE" id="PS50018">
    <property type="entry name" value="RAS_GTPASE_ACTIV_2"/>
    <property type="match status" value="1"/>
</dbReference>
<dbReference type="PROSITE" id="PS51205">
    <property type="entry name" value="VPS9"/>
    <property type="match status" value="1"/>
</dbReference>
<organism>
    <name type="scientific">Homo sapiens</name>
    <name type="common">Human</name>
    <dbReference type="NCBI Taxonomy" id="9606"/>
    <lineage>
        <taxon>Eukaryota</taxon>
        <taxon>Metazoa</taxon>
        <taxon>Chordata</taxon>
        <taxon>Craniata</taxon>
        <taxon>Vertebrata</taxon>
        <taxon>Euteleostomi</taxon>
        <taxon>Mammalia</taxon>
        <taxon>Eutheria</taxon>
        <taxon>Euarchontoglires</taxon>
        <taxon>Primates</taxon>
        <taxon>Haplorrhini</taxon>
        <taxon>Catarrhini</taxon>
        <taxon>Hominidae</taxon>
        <taxon>Homo</taxon>
    </lineage>
</organism>
<comment type="function">
    <text evidence="6">Acts both as a GTPase-activating protein (GAP) and a guanine nucleotide exchange factor (GEF), and participates in various processes such as endocytosis, insulin receptor internalization or LC2A4/GLUT4 trafficking. Acts as a GEF for the Ras-related protein RAB31 by exchanging bound GDP for free GTP, leading to regulate LC2A4/GLUT4 trafficking. In the absence of insulin, it maintains RAB31 in an active state and promotes a futile cycle between LC2A4/GLUT4 storage vesicles and early endosomes, retaining LC2A4/GLUT4 inside the cells. Upon insulin stimulation, it is translocated to the plasma membrane, releasing LC2A4/GLUT4 from intracellular storage vesicles. Also involved in EGFR trafficking and degradation, possibly by promoting EGFR ubiquitination and subsequent degradation by the proteasome. Has GEF activity for Rab5 and GAP activity for Ras.</text>
</comment>
<comment type="subunit">
    <text evidence="1 6">Interacts with TRIP10/CIP4 (By similarity). Interacts with RAB5A.</text>
</comment>
<comment type="subunit">
    <text evidence="7">(Microbial infection) Interacts with P.falciparum (strain 3D7) CK1.</text>
</comment>
<comment type="interaction">
    <interactant intactId="EBI-1049788">
        <id>Q14C86</id>
    </interactant>
    <interactant intactId="EBI-751621">
        <id>P48730</id>
        <label>CSNK1D</label>
    </interactant>
    <organismsDiffer>false</organismsDiffer>
    <experiments>4</experiments>
</comment>
<comment type="interaction">
    <interactant intactId="EBI-1049788">
        <id>Q14C86</id>
    </interactant>
    <interactant intactId="EBI-347088">
        <id>P63104</id>
        <label>YWHAZ</label>
    </interactant>
    <organismsDiffer>false</organismsDiffer>
    <experiments>2</experiments>
</comment>
<comment type="subcellular location">
    <subcellularLocation>
        <location evidence="6">Membrane</location>
        <topology evidence="6">Peripheral membrane protein</topology>
    </subcellularLocation>
    <subcellularLocation>
        <location evidence="6">Endosome</location>
    </subcellularLocation>
    <text>Recruited to the plasma membrane by TRIP10/CIP4 in response to insulin.</text>
</comment>
<comment type="alternative products">
    <event type="alternative splicing"/>
    <isoform>
        <id>Q14C86-1</id>
        <name>1</name>
        <sequence type="displayed"/>
    </isoform>
    <isoform>
        <id>Q14C86-2</id>
        <name>2</name>
        <sequence type="described" ref="VSP_032362"/>
    </isoform>
    <isoform>
        <id>Q14C86-3</id>
        <name>3</name>
        <sequence type="described" ref="VSP_032361 VSP_032362"/>
    </isoform>
    <isoform>
        <id>Q14C86-4</id>
        <name>4</name>
        <sequence type="described" ref="VSP_032358 VSP_032362"/>
    </isoform>
    <isoform>
        <id>Q14C86-5</id>
        <name>5</name>
        <sequence type="described" ref="VSP_032359"/>
    </isoform>
    <isoform>
        <id>Q14C86-6</id>
        <name>6</name>
        <sequence type="described" ref="VSP_032360 VSP_032362"/>
    </isoform>
</comment>
<comment type="tissue specificity">
    <text evidence="7">Expressed in erythrocytes (at protein level).</text>
</comment>
<comment type="similarity">
    <text evidence="12">Belongs to the GAPVD1 family.</text>
</comment>
<comment type="sequence caution" evidence="12">
    <conflict type="erroneous initiation">
        <sequence resource="EMBL-CDS" id="AAH21119"/>
    </conflict>
    <text>Truncated N-terminus.</text>
</comment>
<comment type="sequence caution" evidence="12">
    <conflict type="frameshift">
        <sequence resource="EMBL-CDS" id="AAH21119"/>
    </conflict>
</comment>
<comment type="sequence caution" evidence="12">
    <conflict type="erroneous initiation">
        <sequence resource="EMBL-CDS" id="BAA90959"/>
    </conflict>
    <text>Truncated N-terminus.</text>
</comment>
<comment type="sequence caution" evidence="12">
    <conflict type="miscellaneous discrepancy">
        <sequence resource="EMBL-CDS" id="BAA90959"/>
    </conflict>
    <text>Contaminating sequence. Potential poly-A sequence.</text>
</comment>
<comment type="sequence caution" evidence="12">
    <conflict type="erroneous initiation">
        <sequence resource="EMBL-CDS" id="BAA96045"/>
    </conflict>
</comment>
<name>GAPD1_HUMAN</name>
<protein>
    <recommendedName>
        <fullName>GTPase-activating protein and VPS9 domain-containing protein 1</fullName>
    </recommendedName>
    <alternativeName>
        <fullName>GAPex-5</fullName>
    </alternativeName>
    <alternativeName>
        <fullName>Rab5-activating protein 6</fullName>
    </alternativeName>
</protein>
<proteinExistence type="evidence at protein level"/>
<reference key="1">
    <citation type="journal article" date="2006" name="Biochem. Biophys. Res. Commun.">
        <title>Rab5-activating protein 6, a novel endosomal protein with a role in endocytosis.</title>
        <authorList>
            <person name="Hunker C.M."/>
            <person name="Galvis A."/>
            <person name="Kruk I."/>
            <person name="Giambini H."/>
            <person name="Veisaga M.L."/>
            <person name="Barbieri M.A."/>
        </authorList>
    </citation>
    <scope>NUCLEOTIDE SEQUENCE [MRNA] (ISOFORM 4)</scope>
    <scope>IDENTIFICATION BY MASS SPECTROMETRY</scope>
    <scope>FUNCTION</scope>
    <scope>SUBCELLULAR LOCATION</scope>
    <scope>INTERACTION WITH RAB5A</scope>
</reference>
<reference key="2">
    <citation type="journal article" date="2000" name="DNA Res.">
        <title>Prediction of the coding sequences of unidentified human genes. XVII. The complete sequences of 100 new cDNA clones from brain which code for large proteins in vitro.</title>
        <authorList>
            <person name="Nagase T."/>
            <person name="Kikuno R."/>
            <person name="Ishikawa K."/>
            <person name="Hirosawa M."/>
            <person name="Ohara O."/>
        </authorList>
    </citation>
    <scope>NUCLEOTIDE SEQUENCE [LARGE SCALE MRNA] (ISOFORM 1)</scope>
    <source>
        <tissue>Brain</tissue>
    </source>
</reference>
<reference key="3">
    <citation type="journal article" date="2002" name="DNA Res.">
        <title>Construction of expression-ready cDNA clones for KIAA genes: manual curation of 330 KIAA cDNA clones.</title>
        <authorList>
            <person name="Nakajima D."/>
            <person name="Okazaki N."/>
            <person name="Yamakawa H."/>
            <person name="Kikuno R."/>
            <person name="Ohara O."/>
            <person name="Nagase T."/>
        </authorList>
    </citation>
    <scope>SEQUENCE REVISION</scope>
</reference>
<reference key="4">
    <citation type="journal article" date="2004" name="Nature">
        <title>DNA sequence and analysis of human chromosome 9.</title>
        <authorList>
            <person name="Humphray S.J."/>
            <person name="Oliver K."/>
            <person name="Hunt A.R."/>
            <person name="Plumb R.W."/>
            <person name="Loveland J.E."/>
            <person name="Howe K.L."/>
            <person name="Andrews T.D."/>
            <person name="Searle S."/>
            <person name="Hunt S.E."/>
            <person name="Scott C.E."/>
            <person name="Jones M.C."/>
            <person name="Ainscough R."/>
            <person name="Almeida J.P."/>
            <person name="Ambrose K.D."/>
            <person name="Ashwell R.I.S."/>
            <person name="Babbage A.K."/>
            <person name="Babbage S."/>
            <person name="Bagguley C.L."/>
            <person name="Bailey J."/>
            <person name="Banerjee R."/>
            <person name="Barker D.J."/>
            <person name="Barlow K.F."/>
            <person name="Bates K."/>
            <person name="Beasley H."/>
            <person name="Beasley O."/>
            <person name="Bird C.P."/>
            <person name="Bray-Allen S."/>
            <person name="Brown A.J."/>
            <person name="Brown J.Y."/>
            <person name="Burford D."/>
            <person name="Burrill W."/>
            <person name="Burton J."/>
            <person name="Carder C."/>
            <person name="Carter N.P."/>
            <person name="Chapman J.C."/>
            <person name="Chen Y."/>
            <person name="Clarke G."/>
            <person name="Clark S.Y."/>
            <person name="Clee C.M."/>
            <person name="Clegg S."/>
            <person name="Collier R.E."/>
            <person name="Corby N."/>
            <person name="Crosier M."/>
            <person name="Cummings A.T."/>
            <person name="Davies J."/>
            <person name="Dhami P."/>
            <person name="Dunn M."/>
            <person name="Dutta I."/>
            <person name="Dyer L.W."/>
            <person name="Earthrowl M.E."/>
            <person name="Faulkner L."/>
            <person name="Fleming C.J."/>
            <person name="Frankish A."/>
            <person name="Frankland J.A."/>
            <person name="French L."/>
            <person name="Fricker D.G."/>
            <person name="Garner P."/>
            <person name="Garnett J."/>
            <person name="Ghori J."/>
            <person name="Gilbert J.G.R."/>
            <person name="Glison C."/>
            <person name="Grafham D.V."/>
            <person name="Gribble S."/>
            <person name="Griffiths C."/>
            <person name="Griffiths-Jones S."/>
            <person name="Grocock R."/>
            <person name="Guy J."/>
            <person name="Hall R.E."/>
            <person name="Hammond S."/>
            <person name="Harley J.L."/>
            <person name="Harrison E.S.I."/>
            <person name="Hart E.A."/>
            <person name="Heath P.D."/>
            <person name="Henderson C.D."/>
            <person name="Hopkins B.L."/>
            <person name="Howard P.J."/>
            <person name="Howden P.J."/>
            <person name="Huckle E."/>
            <person name="Johnson C."/>
            <person name="Johnson D."/>
            <person name="Joy A.A."/>
            <person name="Kay M."/>
            <person name="Keenan S."/>
            <person name="Kershaw J.K."/>
            <person name="Kimberley A.M."/>
            <person name="King A."/>
            <person name="Knights A."/>
            <person name="Laird G.K."/>
            <person name="Langford C."/>
            <person name="Lawlor S."/>
            <person name="Leongamornlert D.A."/>
            <person name="Leversha M."/>
            <person name="Lloyd C."/>
            <person name="Lloyd D.M."/>
            <person name="Lovell J."/>
            <person name="Martin S."/>
            <person name="Mashreghi-Mohammadi M."/>
            <person name="Matthews L."/>
            <person name="McLaren S."/>
            <person name="McLay K.E."/>
            <person name="McMurray A."/>
            <person name="Milne S."/>
            <person name="Nickerson T."/>
            <person name="Nisbett J."/>
            <person name="Nordsiek G."/>
            <person name="Pearce A.V."/>
            <person name="Peck A.I."/>
            <person name="Porter K.M."/>
            <person name="Pandian R."/>
            <person name="Pelan S."/>
            <person name="Phillimore B."/>
            <person name="Povey S."/>
            <person name="Ramsey Y."/>
            <person name="Rand V."/>
            <person name="Scharfe M."/>
            <person name="Sehra H.K."/>
            <person name="Shownkeen R."/>
            <person name="Sims S.K."/>
            <person name="Skuce C.D."/>
            <person name="Smith M."/>
            <person name="Steward C.A."/>
            <person name="Swarbreck D."/>
            <person name="Sycamore N."/>
            <person name="Tester J."/>
            <person name="Thorpe A."/>
            <person name="Tracey A."/>
            <person name="Tromans A."/>
            <person name="Thomas D.W."/>
            <person name="Wall M."/>
            <person name="Wallis J.M."/>
            <person name="West A.P."/>
            <person name="Whitehead S.L."/>
            <person name="Willey D.L."/>
            <person name="Williams S.A."/>
            <person name="Wilming L."/>
            <person name="Wray P.W."/>
            <person name="Young L."/>
            <person name="Ashurst J.L."/>
            <person name="Coulson A."/>
            <person name="Blocker H."/>
            <person name="Durbin R.M."/>
            <person name="Sulston J.E."/>
            <person name="Hubbard T."/>
            <person name="Jackson M.J."/>
            <person name="Bentley D.R."/>
            <person name="Beck S."/>
            <person name="Rogers J."/>
            <person name="Dunham I."/>
        </authorList>
    </citation>
    <scope>NUCLEOTIDE SEQUENCE [LARGE SCALE GENOMIC DNA]</scope>
</reference>
<reference key="5">
    <citation type="submission" date="2005-07" db="EMBL/GenBank/DDBJ databases">
        <authorList>
            <person name="Mural R.J."/>
            <person name="Istrail S."/>
            <person name="Sutton G.G."/>
            <person name="Florea L."/>
            <person name="Halpern A.L."/>
            <person name="Mobarry C.M."/>
            <person name="Lippert R."/>
            <person name="Walenz B."/>
            <person name="Shatkay H."/>
            <person name="Dew I."/>
            <person name="Miller J.R."/>
            <person name="Flanigan M.J."/>
            <person name="Edwards N.J."/>
            <person name="Bolanos R."/>
            <person name="Fasulo D."/>
            <person name="Halldorsson B.V."/>
            <person name="Hannenhalli S."/>
            <person name="Turner R."/>
            <person name="Yooseph S."/>
            <person name="Lu F."/>
            <person name="Nusskern D.R."/>
            <person name="Shue B.C."/>
            <person name="Zheng X.H."/>
            <person name="Zhong F."/>
            <person name="Delcher A.L."/>
            <person name="Huson D.H."/>
            <person name="Kravitz S.A."/>
            <person name="Mouchard L."/>
            <person name="Reinert K."/>
            <person name="Remington K.A."/>
            <person name="Clark A.G."/>
            <person name="Waterman M.S."/>
            <person name="Eichler E.E."/>
            <person name="Adams M.D."/>
            <person name="Hunkapiller M.W."/>
            <person name="Myers E.W."/>
            <person name="Venter J.C."/>
        </authorList>
    </citation>
    <scope>NUCLEOTIDE SEQUENCE [LARGE SCALE GENOMIC DNA]</scope>
</reference>
<reference key="6">
    <citation type="journal article" date="2004" name="Genome Res.">
        <title>The status, quality, and expansion of the NIH full-length cDNA project: the Mammalian Gene Collection (MGC).</title>
        <authorList>
            <consortium name="The MGC Project Team"/>
        </authorList>
    </citation>
    <scope>NUCLEOTIDE SEQUENCE [LARGE SCALE MRNA] (ISOFORMS 2 AND 3)</scope>
    <source>
        <tissue>Placenta</tissue>
    </source>
</reference>
<reference key="7">
    <citation type="journal article" date="2004" name="Nat. Genet.">
        <title>Complete sequencing and characterization of 21,243 full-length human cDNAs.</title>
        <authorList>
            <person name="Ota T."/>
            <person name="Suzuki Y."/>
            <person name="Nishikawa T."/>
            <person name="Otsuki T."/>
            <person name="Sugiyama T."/>
            <person name="Irie R."/>
            <person name="Wakamatsu A."/>
            <person name="Hayashi K."/>
            <person name="Sato H."/>
            <person name="Nagai K."/>
            <person name="Kimura K."/>
            <person name="Makita H."/>
            <person name="Sekine M."/>
            <person name="Obayashi M."/>
            <person name="Nishi T."/>
            <person name="Shibahara T."/>
            <person name="Tanaka T."/>
            <person name="Ishii S."/>
            <person name="Yamamoto J."/>
            <person name="Saito K."/>
            <person name="Kawai Y."/>
            <person name="Isono Y."/>
            <person name="Nakamura Y."/>
            <person name="Nagahari K."/>
            <person name="Murakami K."/>
            <person name="Yasuda T."/>
            <person name="Iwayanagi T."/>
            <person name="Wagatsuma M."/>
            <person name="Shiratori A."/>
            <person name="Sudo H."/>
            <person name="Hosoiri T."/>
            <person name="Kaku Y."/>
            <person name="Kodaira H."/>
            <person name="Kondo H."/>
            <person name="Sugawara M."/>
            <person name="Takahashi M."/>
            <person name="Kanda K."/>
            <person name="Yokoi T."/>
            <person name="Furuya T."/>
            <person name="Kikkawa E."/>
            <person name="Omura Y."/>
            <person name="Abe K."/>
            <person name="Kamihara K."/>
            <person name="Katsuta N."/>
            <person name="Sato K."/>
            <person name="Tanikawa M."/>
            <person name="Yamazaki M."/>
            <person name="Ninomiya K."/>
            <person name="Ishibashi T."/>
            <person name="Yamashita H."/>
            <person name="Murakawa K."/>
            <person name="Fujimori K."/>
            <person name="Tanai H."/>
            <person name="Kimata M."/>
            <person name="Watanabe M."/>
            <person name="Hiraoka S."/>
            <person name="Chiba Y."/>
            <person name="Ishida S."/>
            <person name="Ono Y."/>
            <person name="Takiguchi S."/>
            <person name="Watanabe S."/>
            <person name="Yosida M."/>
            <person name="Hotuta T."/>
            <person name="Kusano J."/>
            <person name="Kanehori K."/>
            <person name="Takahashi-Fujii A."/>
            <person name="Hara H."/>
            <person name="Tanase T.-O."/>
            <person name="Nomura Y."/>
            <person name="Togiya S."/>
            <person name="Komai F."/>
            <person name="Hara R."/>
            <person name="Takeuchi K."/>
            <person name="Arita M."/>
            <person name="Imose N."/>
            <person name="Musashino K."/>
            <person name="Yuuki H."/>
            <person name="Oshima A."/>
            <person name="Sasaki N."/>
            <person name="Aotsuka S."/>
            <person name="Yoshikawa Y."/>
            <person name="Matsunawa H."/>
            <person name="Ichihara T."/>
            <person name="Shiohata N."/>
            <person name="Sano S."/>
            <person name="Moriya S."/>
            <person name="Momiyama H."/>
            <person name="Satoh N."/>
            <person name="Takami S."/>
            <person name="Terashima Y."/>
            <person name="Suzuki O."/>
            <person name="Nakagawa S."/>
            <person name="Senoh A."/>
            <person name="Mizoguchi H."/>
            <person name="Goto Y."/>
            <person name="Shimizu F."/>
            <person name="Wakebe H."/>
            <person name="Hishigaki H."/>
            <person name="Watanabe T."/>
            <person name="Sugiyama A."/>
            <person name="Takemoto M."/>
            <person name="Kawakami B."/>
            <person name="Yamazaki M."/>
            <person name="Watanabe K."/>
            <person name="Kumagai A."/>
            <person name="Itakura S."/>
            <person name="Fukuzumi Y."/>
            <person name="Fujimori Y."/>
            <person name="Komiyama M."/>
            <person name="Tashiro H."/>
            <person name="Tanigami A."/>
            <person name="Fujiwara T."/>
            <person name="Ono T."/>
            <person name="Yamada K."/>
            <person name="Fujii Y."/>
            <person name="Ozaki K."/>
            <person name="Hirao M."/>
            <person name="Ohmori Y."/>
            <person name="Kawabata A."/>
            <person name="Hikiji T."/>
            <person name="Kobatake N."/>
            <person name="Inagaki H."/>
            <person name="Ikema Y."/>
            <person name="Okamoto S."/>
            <person name="Okitani R."/>
            <person name="Kawakami T."/>
            <person name="Noguchi S."/>
            <person name="Itoh T."/>
            <person name="Shigeta K."/>
            <person name="Senba T."/>
            <person name="Matsumura K."/>
            <person name="Nakajima Y."/>
            <person name="Mizuno T."/>
            <person name="Morinaga M."/>
            <person name="Sasaki M."/>
            <person name="Togashi T."/>
            <person name="Oyama M."/>
            <person name="Hata H."/>
            <person name="Watanabe M."/>
            <person name="Komatsu T."/>
            <person name="Mizushima-Sugano J."/>
            <person name="Satoh T."/>
            <person name="Shirai Y."/>
            <person name="Takahashi Y."/>
            <person name="Nakagawa K."/>
            <person name="Okumura K."/>
            <person name="Nagase T."/>
            <person name="Nomura N."/>
            <person name="Kikuchi H."/>
            <person name="Masuho Y."/>
            <person name="Yamashita R."/>
            <person name="Nakai K."/>
            <person name="Yada T."/>
            <person name="Nakamura Y."/>
            <person name="Ohara O."/>
            <person name="Isogai T."/>
            <person name="Sugano S."/>
        </authorList>
    </citation>
    <scope>NUCLEOTIDE SEQUENCE [LARGE SCALE MRNA] OF 139-996 (ISOFORM 5)</scope>
    <source>
        <tissue>Colon</tissue>
    </source>
</reference>
<reference key="8">
    <citation type="journal article" date="2007" name="BMC Genomics">
        <title>The full-ORF clone resource of the German cDNA consortium.</title>
        <authorList>
            <person name="Bechtel S."/>
            <person name="Rosenfelder H."/>
            <person name="Duda A."/>
            <person name="Schmidt C.P."/>
            <person name="Ernst U."/>
            <person name="Wellenreuther R."/>
            <person name="Mehrle A."/>
            <person name="Schuster C."/>
            <person name="Bahr A."/>
            <person name="Bloecker H."/>
            <person name="Heubner D."/>
            <person name="Hoerlein A."/>
            <person name="Michel G."/>
            <person name="Wedler H."/>
            <person name="Koehrer K."/>
            <person name="Ottenwaelder B."/>
            <person name="Poustka A."/>
            <person name="Wiemann S."/>
            <person name="Schupp I."/>
        </authorList>
    </citation>
    <scope>NUCLEOTIDE SEQUENCE [LARGE SCALE MRNA] OF 675-1478 (ISOFORM 6)</scope>
    <source>
        <tissue>Testis</tissue>
    </source>
</reference>
<reference key="9">
    <citation type="journal article" date="2006" name="Nat. Biotechnol.">
        <title>A probability-based approach for high-throughput protein phosphorylation analysis and site localization.</title>
        <authorList>
            <person name="Beausoleil S.A."/>
            <person name="Villen J."/>
            <person name="Gerber S.A."/>
            <person name="Rush J."/>
            <person name="Gygi S.P."/>
        </authorList>
    </citation>
    <scope>PHOSPHORYLATION [LARGE SCALE ANALYSIS] AT THR-390 AND SER-1019</scope>
    <scope>IDENTIFICATION BY MASS SPECTROMETRY [LARGE SCALE ANALYSIS]</scope>
    <source>
        <tissue>Cervix carcinoma</tissue>
    </source>
</reference>
<reference key="10">
    <citation type="journal article" date="2007" name="Science">
        <title>ATM and ATR substrate analysis reveals extensive protein networks responsive to DNA damage.</title>
        <authorList>
            <person name="Matsuoka S."/>
            <person name="Ballif B.A."/>
            <person name="Smogorzewska A."/>
            <person name="McDonald E.R. III"/>
            <person name="Hurov K.E."/>
            <person name="Luo J."/>
            <person name="Bakalarski C.E."/>
            <person name="Zhao Z."/>
            <person name="Solimini N."/>
            <person name="Lerenthal Y."/>
            <person name="Shiloh Y."/>
            <person name="Gygi S.P."/>
            <person name="Elledge S.J."/>
        </authorList>
    </citation>
    <scope>IDENTIFICATION BY MASS SPECTROMETRY [LARGE SCALE ANALYSIS]</scope>
    <source>
        <tissue>Embryonic kidney</tissue>
    </source>
</reference>
<reference key="11">
    <citation type="journal article" date="2008" name="J. Proteome Res.">
        <title>Combining protein-based IMAC, peptide-based IMAC, and MudPIT for efficient phosphoproteomic analysis.</title>
        <authorList>
            <person name="Cantin G.T."/>
            <person name="Yi W."/>
            <person name="Lu B."/>
            <person name="Park S.K."/>
            <person name="Xu T."/>
            <person name="Lee J.-D."/>
            <person name="Yates J.R. III"/>
        </authorList>
    </citation>
    <scope>PHOSPHORYLATION [LARGE SCALE ANALYSIS] AT SER-1096</scope>
    <scope>IDENTIFICATION BY MASS SPECTROMETRY [LARGE SCALE ANALYSIS]</scope>
    <source>
        <tissue>Cervix carcinoma</tissue>
    </source>
</reference>
<reference key="12">
    <citation type="journal article" date="2008" name="Mol. Cell">
        <title>Kinase-selective enrichment enables quantitative phosphoproteomics of the kinome across the cell cycle.</title>
        <authorList>
            <person name="Daub H."/>
            <person name="Olsen J.V."/>
            <person name="Bairlein M."/>
            <person name="Gnad F."/>
            <person name="Oppermann F.S."/>
            <person name="Korner R."/>
            <person name="Greff Z."/>
            <person name="Keri G."/>
            <person name="Stemmann O."/>
            <person name="Mann M."/>
        </authorList>
    </citation>
    <scope>PHOSPHORYLATION [LARGE SCALE ANALYSIS] AT THR-390 AND SER-1019</scope>
    <scope>IDENTIFICATION BY MASS SPECTROMETRY [LARGE SCALE ANALYSIS]</scope>
    <source>
        <tissue>Cervix carcinoma</tissue>
    </source>
</reference>
<reference key="13">
    <citation type="journal article" date="2008" name="Proc. Natl. Acad. Sci. U.S.A.">
        <title>A quantitative atlas of mitotic phosphorylation.</title>
        <authorList>
            <person name="Dephoure N."/>
            <person name="Zhou C."/>
            <person name="Villen J."/>
            <person name="Beausoleil S.A."/>
            <person name="Bakalarski C.E."/>
            <person name="Elledge S.J."/>
            <person name="Gygi S.P."/>
        </authorList>
    </citation>
    <scope>PHOSPHORYLATION [LARGE SCALE ANALYSIS] AT THR-390; THR-458; SER-466; THR-470; SER-566; SER-902; SER-903; SER-1019 AND SER-1096</scope>
    <scope>IDENTIFICATION BY MASS SPECTROMETRY [LARGE SCALE ANALYSIS]</scope>
    <source>
        <tissue>Cervix carcinoma</tissue>
    </source>
</reference>
<reference key="14">
    <citation type="journal article" date="2009" name="Anal. Chem.">
        <title>Lys-N and trypsin cover complementary parts of the phosphoproteome in a refined SCX-based approach.</title>
        <authorList>
            <person name="Gauci S."/>
            <person name="Helbig A.O."/>
            <person name="Slijper M."/>
            <person name="Krijgsveld J."/>
            <person name="Heck A.J."/>
            <person name="Mohammed S."/>
        </authorList>
    </citation>
    <scope>IDENTIFICATION BY MASS SPECTROMETRY [LARGE SCALE ANALYSIS]</scope>
</reference>
<reference key="15">
    <citation type="journal article" date="2009" name="Sci. Signal.">
        <title>Quantitative phosphoproteomic analysis of T cell receptor signaling reveals system-wide modulation of protein-protein interactions.</title>
        <authorList>
            <person name="Mayya V."/>
            <person name="Lundgren D.H."/>
            <person name="Hwang S.-I."/>
            <person name="Rezaul K."/>
            <person name="Wu L."/>
            <person name="Eng J.K."/>
            <person name="Rodionov V."/>
            <person name="Han D.K."/>
        </authorList>
    </citation>
    <scope>PHOSPHORYLATION [LARGE SCALE ANALYSIS] AT SER-466; SER-766; SER-902 AND SER-1096</scope>
    <scope>IDENTIFICATION BY MASS SPECTROMETRY [LARGE SCALE ANALYSIS]</scope>
    <source>
        <tissue>Leukemic T-cell</tissue>
    </source>
</reference>
<reference key="16">
    <citation type="journal article" date="2010" name="Sci. Signal.">
        <title>Quantitative phosphoproteomics reveals widespread full phosphorylation site occupancy during mitosis.</title>
        <authorList>
            <person name="Olsen J.V."/>
            <person name="Vermeulen M."/>
            <person name="Santamaria A."/>
            <person name="Kumar C."/>
            <person name="Miller M.L."/>
            <person name="Jensen L.J."/>
            <person name="Gnad F."/>
            <person name="Cox J."/>
            <person name="Jensen T.S."/>
            <person name="Nigg E.A."/>
            <person name="Brunak S."/>
            <person name="Mann M."/>
        </authorList>
    </citation>
    <scope>PHOSPHORYLATION [LARGE SCALE ANALYSIS] AT THR-390; SER-902; SER-966 AND SER-1019</scope>
    <scope>IDENTIFICATION BY MASS SPECTROMETRY [LARGE SCALE ANALYSIS]</scope>
    <source>
        <tissue>Cervix carcinoma</tissue>
    </source>
</reference>
<reference key="17">
    <citation type="journal article" date="2011" name="BMC Syst. Biol.">
        <title>Initial characterization of the human central proteome.</title>
        <authorList>
            <person name="Burkard T.R."/>
            <person name="Planyavsky M."/>
            <person name="Kaupe I."/>
            <person name="Breitwieser F.P."/>
            <person name="Buerckstuemmer T."/>
            <person name="Bennett K.L."/>
            <person name="Superti-Furga G."/>
            <person name="Colinge J."/>
        </authorList>
    </citation>
    <scope>IDENTIFICATION BY MASS SPECTROMETRY [LARGE SCALE ANALYSIS]</scope>
</reference>
<reference key="18">
    <citation type="journal article" date="2011" name="Sci. Signal.">
        <title>System-wide temporal characterization of the proteome and phosphoproteome of human embryonic stem cell differentiation.</title>
        <authorList>
            <person name="Rigbolt K.T."/>
            <person name="Prokhorova T.A."/>
            <person name="Akimov V."/>
            <person name="Henningsen J."/>
            <person name="Johansen P.T."/>
            <person name="Kratchmarova I."/>
            <person name="Kassem M."/>
            <person name="Mann M."/>
            <person name="Olsen J.V."/>
            <person name="Blagoev B."/>
        </authorList>
    </citation>
    <scope>PHOSPHORYLATION [LARGE SCALE ANALYSIS] AT SER-902</scope>
    <scope>IDENTIFICATION BY MASS SPECTROMETRY [LARGE SCALE ANALYSIS]</scope>
</reference>
<reference key="19">
    <citation type="journal article" date="2013" name="J. Proteome Res.">
        <title>Toward a comprehensive characterization of a human cancer cell phosphoproteome.</title>
        <authorList>
            <person name="Zhou H."/>
            <person name="Di Palma S."/>
            <person name="Preisinger C."/>
            <person name="Peng M."/>
            <person name="Polat A.N."/>
            <person name="Heck A.J."/>
            <person name="Mohammed S."/>
        </authorList>
    </citation>
    <scope>PHOSPHORYLATION [LARGE SCALE ANALYSIS] AT SER-227; THR-390; SER-466; SER-746; SER-876; SER-902; SER-903; SER-1019 AND SER-1096</scope>
    <scope>IDENTIFICATION BY MASS SPECTROMETRY [LARGE SCALE ANALYSIS]</scope>
    <source>
        <tissue>Cervix carcinoma</tissue>
        <tissue>Erythroleukemia</tissue>
    </source>
</reference>
<reference key="20">
    <citation type="journal article" date="2014" name="J. Proteomics">
        <title>An enzyme assisted RP-RPLC approach for in-depth analysis of human liver phosphoproteome.</title>
        <authorList>
            <person name="Bian Y."/>
            <person name="Song C."/>
            <person name="Cheng K."/>
            <person name="Dong M."/>
            <person name="Wang F."/>
            <person name="Huang J."/>
            <person name="Sun D."/>
            <person name="Wang L."/>
            <person name="Ye M."/>
            <person name="Zou H."/>
        </authorList>
    </citation>
    <scope>PHOSPHORYLATION [LARGE SCALE ANALYSIS] AT SER-757 AND THR-762</scope>
    <scope>IDENTIFICATION BY MASS SPECTROMETRY [LARGE SCALE ANALYSIS]</scope>
    <source>
        <tissue>Liver</tissue>
    </source>
</reference>
<reference key="21">
    <citation type="journal article" date="2020" name="IUBMB Life">
        <title>Interaction of Plasmodium falciparum casein kinase 1 with components of host cell protein trafficking machinery.</title>
        <authorList>
            <person name="Batty M.B."/>
            <person name="Schittenhelm R.B."/>
            <person name="Dorin-Semblat D."/>
            <person name="Doerig C."/>
            <person name="Garcia-Bustos J.F."/>
        </authorList>
    </citation>
    <scope>INTERACTION WITH P.FALCIPARUM CK1 (MICROBIAL INFECTION)</scope>
    <scope>TISSUE SPECIFICITY</scope>
    <scope>IDENTIFICATION BY MASS SPECTROMETRY</scope>
    <scope>PHOSPHORYLATION AT THR-390; TYR-460; SER-902; SER-903; SER-914 AND SER-1103</scope>
</reference>
<evidence type="ECO:0000250" key="1"/>
<evidence type="ECO:0000250" key="2">
    <source>
        <dbReference type="UniProtKB" id="Q6PAR5"/>
    </source>
</evidence>
<evidence type="ECO:0000255" key="3">
    <source>
        <dbReference type="PROSITE-ProRule" id="PRU00167"/>
    </source>
</evidence>
<evidence type="ECO:0000255" key="4">
    <source>
        <dbReference type="PROSITE-ProRule" id="PRU00550"/>
    </source>
</evidence>
<evidence type="ECO:0000256" key="5">
    <source>
        <dbReference type="SAM" id="MobiDB-lite"/>
    </source>
</evidence>
<evidence type="ECO:0000269" key="6">
    <source>
    </source>
</evidence>
<evidence type="ECO:0000269" key="7">
    <source>
    </source>
</evidence>
<evidence type="ECO:0000303" key="8">
    <source>
    </source>
</evidence>
<evidence type="ECO:0000303" key="9">
    <source>
    </source>
</evidence>
<evidence type="ECO:0000303" key="10">
    <source>
    </source>
</evidence>
<evidence type="ECO:0000303" key="11">
    <source>
    </source>
</evidence>
<evidence type="ECO:0000305" key="12"/>
<evidence type="ECO:0007744" key="13">
    <source>
    </source>
</evidence>
<evidence type="ECO:0007744" key="14">
    <source>
    </source>
</evidence>
<evidence type="ECO:0007744" key="15">
    <source>
    </source>
</evidence>
<evidence type="ECO:0007744" key="16">
    <source>
    </source>
</evidence>
<evidence type="ECO:0007744" key="17">
    <source>
    </source>
</evidence>
<evidence type="ECO:0007744" key="18">
    <source>
    </source>
</evidence>
<evidence type="ECO:0007744" key="19">
    <source>
    </source>
</evidence>
<evidence type="ECO:0007744" key="20">
    <source>
    </source>
</evidence>
<evidence type="ECO:0007744" key="21">
    <source>
    </source>
</evidence>
<sequence>MVKLDIHTLAHHLKQERLYVNSEKQLIQRLNADVLKTAEKLYRTAWIAKQQRINLDRLIITSAEASPAECCQHAKILEDTQFVDGYKQLGFQETAYGEFLSRLRENPRLIASSLVAGEKLNQENTQSVIYTVFTSLYGNCIMQEDESYLLQVLRYLIEFELKESDNPRRLLRRGTCAFSILFKLFSEGLFSAKLFLTATLHEPIMQLLVEDEDHLETDPNKLIERFSPSQQEKLFGEKGSDRFRQKVQEMVESNEAKLVALVNKFIGYLKQNTYCFPHSLRWIVSQMYKTLSCVDRLEVGEVRAMCTDLLLACFICPAVVNPEQYGIISDAPINEVARFNLMQVGRLLQQLAMTGSEEGDPRTKSSLGKFDKSCVAAFLDVVIGGRAVETPPLSSVNLLEGLSRTVVYITYSQLITLVNFMKSVMSGDQLREDRMALDNLLANLPPAKPGKSSSLEMTPYNTPQLSPATTPANKKNRLPIATRSRSRTNMLMDLHMDHEGSSQETIQEVQPEEVLVISLGTGPQLTPGMMSENEVLNMQLSDGGQGDVPVDENKLHGKPDKTLRFSLCSDNLEGISEGPSNRSNSVSSLDLEGESVSELGAGPSGSNGVEALQLLEHEQATTQDNLDDKLRKFEIRDMMGLTDDRDISETVSETWSTDVLGSDFDPNIDEDRLQEIAGAAAENMLGSLLCLPGSGSVLLDPCTGSTISETTSEAWSVEVLPSDSEAPDLKQEERLQELESCSGLGSTSDDTDVREVSSRPSTPGLSVVSGISATSEDIPNKIEDLRSECSSDFGGKDSVTSPDMDEITHGAHQLTSPPSQSESLLAMFDPLSSHEGASAVVRPKVHYARPSHPPPDPPILEGAVGGNEARLPNFGSHVLTPAEMEAFKQRHSYPERLVRSRSSDIVSSVRRPMSDPSWNRRPGNEERELPPAAAIGATSLVAAPHSSSSSPSKDSSRGETEERKDSDDEKSDRNRPWWRKRFVSAMPKAPIPFRKKEKQEKDKDDLGPDRFSTLTDDPSPRLSAQAQVAEDILDKYRNAIKRTSPSDGAMANYESTGDNHDRDLSSKLLYHSDKEVMGDGESAHDSPRDEALQNISADDLPDSASQAAHPQDSAFSYRDAKKKLRLALCSADSVAFPVLTHSTRNGLPDHTDPEDNEIVCFLKVQIAEAINLQDKNLMAQLQETMRCVCRFDNRTCRKLLASIAEDYRKRAPYIAYLTRCRQGLQTTQAHLERLLQRVLRDKEVANRYFTTVCVRLLLESKEKKIREFIQDFQKLTAADDKTAQVEDFLQFLYGAMAQDVIWQNASEEQLQDAQLAIERSVMNRIFKLAFYPNQDGDILRDQVLHEHIQRLSKVVTANHRALQIPEVYLREAPWPSAQSEIRTISAYKTPRDKVQCILRMCSTIMNLLSLANEDSVPGADDFVPVLVFVLIKANPPCLLSTVQYISSFYASCLSGEESYWWMQFTAAVEFIKTIDDRK</sequence>
<gene>
    <name type="primary">GAPVD1</name>
    <name type="synonym">GAPEX5</name>
    <name type="synonym">KIAA1521</name>
    <name type="synonym">RAP6</name>
</gene>
<keyword id="KW-0025">Alternative splicing</keyword>
<keyword id="KW-0254">Endocytosis</keyword>
<keyword id="KW-0967">Endosome</keyword>
<keyword id="KW-0343">GTPase activation</keyword>
<keyword id="KW-0344">Guanine-nucleotide releasing factor</keyword>
<keyword id="KW-0472">Membrane</keyword>
<keyword id="KW-0597">Phosphoprotein</keyword>
<keyword id="KW-1267">Proteomics identification</keyword>
<keyword id="KW-1185">Reference proteome</keyword>
<feature type="chain" id="PRO_0000324771" description="GTPase-activating protein and VPS9 domain-containing protein 1">
    <location>
        <begin position="1"/>
        <end position="1478"/>
    </location>
</feature>
<feature type="domain" description="Ras-GAP" evidence="3">
    <location>
        <begin position="147"/>
        <end position="385"/>
    </location>
</feature>
<feature type="domain" description="VPS9" evidence="4">
    <location>
        <begin position="1338"/>
        <end position="1478"/>
    </location>
</feature>
<feature type="region of interest" description="Disordered" evidence="5">
    <location>
        <begin position="574"/>
        <end position="608"/>
    </location>
</feature>
<feature type="region of interest" description="Disordered" evidence="5">
    <location>
        <begin position="739"/>
        <end position="820"/>
    </location>
</feature>
<feature type="region of interest" description="Disordered" evidence="5">
    <location>
        <begin position="846"/>
        <end position="874"/>
    </location>
</feature>
<feature type="region of interest" description="Disordered" evidence="5">
    <location>
        <begin position="889"/>
        <end position="1023"/>
    </location>
</feature>
<feature type="region of interest" description="Disordered" evidence="5">
    <location>
        <begin position="1043"/>
        <end position="1064"/>
    </location>
</feature>
<feature type="compositionally biased region" description="Polar residues" evidence="5">
    <location>
        <begin position="578"/>
        <end position="588"/>
    </location>
</feature>
<feature type="compositionally biased region" description="Polar residues" evidence="5">
    <location>
        <begin position="758"/>
        <end position="777"/>
    </location>
</feature>
<feature type="compositionally biased region" description="Basic and acidic residues" evidence="5">
    <location>
        <begin position="778"/>
        <end position="789"/>
    </location>
</feature>
<feature type="compositionally biased region" description="Basic and acidic residues" evidence="5">
    <location>
        <begin position="889"/>
        <end position="902"/>
    </location>
</feature>
<feature type="compositionally biased region" description="Basic and acidic residues" evidence="5">
    <location>
        <begin position="954"/>
        <end position="975"/>
    </location>
</feature>
<feature type="compositionally biased region" description="Basic and acidic residues" evidence="5">
    <location>
        <begin position="997"/>
        <end position="1008"/>
    </location>
</feature>
<feature type="compositionally biased region" description="Polar residues" evidence="5">
    <location>
        <begin position="1012"/>
        <end position="1023"/>
    </location>
</feature>
<feature type="site" description="Arginine finger; crucial for GTP hydrolysis by stabilizing the transition state" evidence="3">
    <location>
        <position position="172"/>
    </location>
</feature>
<feature type="modified residue" description="Phosphoserine" evidence="20">
    <location>
        <position position="227"/>
    </location>
</feature>
<feature type="modified residue" description="Phosphothreonine" evidence="7 13 15 16 18 20">
    <location>
        <position position="390"/>
    </location>
</feature>
<feature type="modified residue" description="Phosphothreonine" evidence="15">
    <location>
        <position position="458"/>
    </location>
</feature>
<feature type="modified residue" description="Phosphotyrosine" evidence="7">
    <location>
        <position position="460"/>
    </location>
</feature>
<feature type="modified residue" description="Phosphoserine" evidence="15 17 20">
    <location>
        <position position="466"/>
    </location>
</feature>
<feature type="modified residue" description="Phosphothreonine" evidence="15">
    <location>
        <position position="470"/>
    </location>
</feature>
<feature type="modified residue" description="Phosphoserine" evidence="15">
    <location>
        <position position="566"/>
    </location>
</feature>
<feature type="modified residue" description="Phosphoserine" evidence="2">
    <location>
        <position position="569"/>
    </location>
</feature>
<feature type="modified residue" description="Phosphoserine" evidence="2">
    <location>
        <position position="742"/>
    </location>
</feature>
<feature type="modified residue" description="Phosphoserine" evidence="20">
    <location>
        <position position="746"/>
    </location>
</feature>
<feature type="modified residue" description="Phosphoserine" evidence="21">
    <location>
        <position position="757"/>
    </location>
</feature>
<feature type="modified residue" description="Phosphothreonine" evidence="21">
    <location>
        <position position="762"/>
    </location>
</feature>
<feature type="modified residue" description="Phosphoserine" evidence="17">
    <location>
        <position position="766"/>
    </location>
</feature>
<feature type="modified residue" description="Phosphoserine" evidence="20">
    <location>
        <position position="876"/>
    </location>
</feature>
<feature type="modified residue" description="Phosphoserine" evidence="7 15 17 18 19 20">
    <location>
        <position position="902"/>
    </location>
</feature>
<feature type="modified residue" description="Phosphoserine" evidence="7 15 20">
    <location>
        <position position="903"/>
    </location>
</feature>
<feature type="modified residue" description="Phosphoserine" evidence="2">
    <location>
        <position position="908"/>
    </location>
</feature>
<feature type="modified residue" description="Phosphoserine" evidence="7">
    <location>
        <position position="914"/>
    </location>
</feature>
<feature type="modified residue" description="Phosphoserine" evidence="18">
    <location>
        <position position="966"/>
    </location>
</feature>
<feature type="modified residue" description="Phosphoserine" evidence="13 15 16 18 20">
    <location>
        <position position="1019"/>
    </location>
</feature>
<feature type="modified residue" description="Phosphoserine" evidence="2">
    <location>
        <position position="1046"/>
    </location>
</feature>
<feature type="modified residue" description="Phosphoserine" evidence="14 15 17 20">
    <location>
        <position position="1096"/>
    </location>
</feature>
<feature type="modified residue" description="Phosphoserine" evidence="7">
    <location>
        <position position="1103"/>
    </location>
</feature>
<feature type="splice variant" id="VSP_032358" description="In isoform 4." evidence="10">
    <location>
        <begin position="557"/>
        <end position="577"/>
    </location>
</feature>
<feature type="splice variant" id="VSP_032359" description="In isoform 5." evidence="8">
    <location>
        <begin position="810"/>
        <end position="835"/>
    </location>
</feature>
<feature type="splice variant" id="VSP_032360" description="In isoform 6." evidence="11">
    <original>G</original>
    <variation>DFLYILQPKQHFQHIEAEADMRIQLSSS</variation>
    <location>
        <position position="810"/>
    </location>
</feature>
<feature type="splice variant" id="VSP_032361" description="In isoform 3." evidence="9">
    <location>
        <begin position="989"/>
        <end position="1015"/>
    </location>
</feature>
<feature type="splice variant" id="VSP_032362" description="In isoform 2, isoform 3, isoform 4 and isoform 6." evidence="9 10 11">
    <location>
        <begin position="1057"/>
        <end position="1074"/>
    </location>
</feature>
<feature type="sequence conflict" description="In Ref. 1; ABB71126." evidence="12" ref="1">
    <original>V</original>
    <variation>E</variation>
    <location>
        <position position="294"/>
    </location>
</feature>
<feature type="sequence conflict" description="In Ref. 1; ABB71126." evidence="12" ref="1">
    <original>C</original>
    <variation>R</variation>
    <location>
        <position position="306"/>
    </location>
</feature>
<feature type="sequence conflict" description="In Ref. 7; BAA90959." evidence="12" ref="7">
    <original>A</original>
    <variation>T</variation>
    <location>
        <position position="352"/>
    </location>
</feature>
<feature type="sequence conflict" description="In Ref. 1; ABB71126." evidence="12" ref="1">
    <original>S</original>
    <variation>C</variation>
    <location>
        <position position="366"/>
    </location>
</feature>
<feature type="sequence conflict" description="In Ref. 7; BAA90959." evidence="12" ref="7">
    <original>N</original>
    <variation>D</variation>
    <location>
        <position position="419"/>
    </location>
</feature>
<feature type="sequence conflict" description="In Ref. 1; ABB71126." evidence="12" ref="1">
    <original>L</original>
    <variation>F</variation>
    <location>
        <position position="455"/>
    </location>
</feature>
<feature type="sequence conflict" description="In Ref. 1; ABB71126." evidence="12" ref="1">
    <original>P</original>
    <variation>L</variation>
    <location>
        <position position="471"/>
    </location>
</feature>
<feature type="sequence conflict" description="In Ref. 6; AAH21119." evidence="12" ref="6">
    <original>M</original>
    <variation>I</variation>
    <location>
        <position position="530"/>
    </location>
</feature>
<feature type="sequence conflict" description="In Ref. 7; BAA90959." evidence="12" ref="7">
    <original>E</original>
    <variation>G</variation>
    <location>
        <position position="532"/>
    </location>
</feature>
<feature type="sequence conflict" description="In Ref. 6; AAH21119." evidence="12" ref="6">
    <original>C</original>
    <variation>F</variation>
    <location>
        <position position="741"/>
    </location>
</feature>
<feature type="sequence conflict" description="In Ref. 7; BAA90959." evidence="12" ref="7">
    <original>S</original>
    <variation>G</variation>
    <location>
        <position position="902"/>
    </location>
</feature>
<feature type="sequence conflict" description="In Ref. 6; AAH13635." evidence="12" ref="6">
    <original>P</original>
    <variation>S</variation>
    <location>
        <position position="931"/>
    </location>
</feature>
<feature type="sequence conflict" description="In Ref. 1; ABB71126." evidence="12" ref="1">
    <original>R</original>
    <variation>W</variation>
    <location>
        <position position="1037"/>
    </location>
</feature>
<feature type="sequence conflict" description="In Ref. 1; ABB71126." evidence="12" ref="1">
    <original>L</original>
    <variation>S</variation>
    <location>
        <position position="1162"/>
    </location>
</feature>
<feature type="sequence conflict" description="In Ref. 1; ABB71126." evidence="12" ref="1">
    <original>V</original>
    <variation>L</variation>
    <location>
        <position position="1425"/>
    </location>
</feature>